<comment type="similarity">
    <text evidence="1">Belongs to the universal ribosomal protein uL29 family.</text>
</comment>
<organism>
    <name type="scientific">Chloroherpeton thalassium (strain ATCC 35110 / GB-78)</name>
    <dbReference type="NCBI Taxonomy" id="517418"/>
    <lineage>
        <taxon>Bacteria</taxon>
        <taxon>Pseudomonadati</taxon>
        <taxon>Chlorobiota</taxon>
        <taxon>Chlorobiia</taxon>
        <taxon>Chlorobiales</taxon>
        <taxon>Chloroherpetonaceae</taxon>
        <taxon>Chloroherpeton</taxon>
    </lineage>
</organism>
<name>RL29_CHLT3</name>
<keyword id="KW-1185">Reference proteome</keyword>
<keyword id="KW-0687">Ribonucleoprotein</keyword>
<keyword id="KW-0689">Ribosomal protein</keyword>
<evidence type="ECO:0000255" key="1">
    <source>
        <dbReference type="HAMAP-Rule" id="MF_00374"/>
    </source>
</evidence>
<evidence type="ECO:0000305" key="2"/>
<dbReference type="EMBL" id="CP001100">
    <property type="protein sequence ID" value="ACF13560.1"/>
    <property type="molecule type" value="Genomic_DNA"/>
</dbReference>
<dbReference type="RefSeq" id="WP_012499644.1">
    <property type="nucleotide sequence ID" value="NC_011026.1"/>
</dbReference>
<dbReference type="SMR" id="B3QYD2"/>
<dbReference type="STRING" id="517418.Ctha_1096"/>
<dbReference type="KEGG" id="cts:Ctha_1096"/>
<dbReference type="eggNOG" id="COG0255">
    <property type="taxonomic scope" value="Bacteria"/>
</dbReference>
<dbReference type="HOGENOM" id="CLU_158491_5_1_10"/>
<dbReference type="OrthoDB" id="5296761at2"/>
<dbReference type="Proteomes" id="UP000001208">
    <property type="component" value="Chromosome"/>
</dbReference>
<dbReference type="GO" id="GO:1990904">
    <property type="term" value="C:ribonucleoprotein complex"/>
    <property type="evidence" value="ECO:0007669"/>
    <property type="project" value="UniProtKB-KW"/>
</dbReference>
<dbReference type="GO" id="GO:0005840">
    <property type="term" value="C:ribosome"/>
    <property type="evidence" value="ECO:0007669"/>
    <property type="project" value="UniProtKB-KW"/>
</dbReference>
<dbReference type="GO" id="GO:0003735">
    <property type="term" value="F:structural constituent of ribosome"/>
    <property type="evidence" value="ECO:0007669"/>
    <property type="project" value="InterPro"/>
</dbReference>
<dbReference type="GO" id="GO:0006412">
    <property type="term" value="P:translation"/>
    <property type="evidence" value="ECO:0007669"/>
    <property type="project" value="UniProtKB-UniRule"/>
</dbReference>
<dbReference type="CDD" id="cd00427">
    <property type="entry name" value="Ribosomal_L29_HIP"/>
    <property type="match status" value="1"/>
</dbReference>
<dbReference type="Gene3D" id="1.10.287.310">
    <property type="match status" value="1"/>
</dbReference>
<dbReference type="HAMAP" id="MF_00374">
    <property type="entry name" value="Ribosomal_uL29"/>
    <property type="match status" value="1"/>
</dbReference>
<dbReference type="InterPro" id="IPR001854">
    <property type="entry name" value="Ribosomal_uL29"/>
</dbReference>
<dbReference type="InterPro" id="IPR018254">
    <property type="entry name" value="Ribosomal_uL29_CS"/>
</dbReference>
<dbReference type="InterPro" id="IPR036049">
    <property type="entry name" value="Ribosomal_uL29_sf"/>
</dbReference>
<dbReference type="NCBIfam" id="TIGR00012">
    <property type="entry name" value="L29"/>
    <property type="match status" value="1"/>
</dbReference>
<dbReference type="Pfam" id="PF00831">
    <property type="entry name" value="Ribosomal_L29"/>
    <property type="match status" value="1"/>
</dbReference>
<dbReference type="SUPFAM" id="SSF46561">
    <property type="entry name" value="Ribosomal protein L29 (L29p)"/>
    <property type="match status" value="1"/>
</dbReference>
<dbReference type="PROSITE" id="PS00579">
    <property type="entry name" value="RIBOSOMAL_L29"/>
    <property type="match status" value="1"/>
</dbReference>
<protein>
    <recommendedName>
        <fullName evidence="1">Large ribosomal subunit protein uL29</fullName>
    </recommendedName>
    <alternativeName>
        <fullName evidence="2">50S ribosomal protein L29</fullName>
    </alternativeName>
</protein>
<reference key="1">
    <citation type="submission" date="2008-06" db="EMBL/GenBank/DDBJ databases">
        <title>Complete sequence of Chloroherpeton thalassium ATCC 35110.</title>
        <authorList>
            <consortium name="US DOE Joint Genome Institute"/>
            <person name="Lucas S."/>
            <person name="Copeland A."/>
            <person name="Lapidus A."/>
            <person name="Glavina del Rio T."/>
            <person name="Dalin E."/>
            <person name="Tice H."/>
            <person name="Bruce D."/>
            <person name="Goodwin L."/>
            <person name="Pitluck S."/>
            <person name="Schmutz J."/>
            <person name="Larimer F."/>
            <person name="Land M."/>
            <person name="Hauser L."/>
            <person name="Kyrpides N."/>
            <person name="Mikhailova N."/>
            <person name="Liu Z."/>
            <person name="Li T."/>
            <person name="Zhao F."/>
            <person name="Overmann J."/>
            <person name="Bryant D.A."/>
            <person name="Richardson P."/>
        </authorList>
    </citation>
    <scope>NUCLEOTIDE SEQUENCE [LARGE SCALE GENOMIC DNA]</scope>
    <source>
        <strain>ATCC 35110 / GB-78</strain>
    </source>
</reference>
<gene>
    <name evidence="1" type="primary">rpmC</name>
    <name type="ordered locus">Ctha_1096</name>
</gene>
<accession>B3QYD2</accession>
<sequence length="64" mass="7750">MKKHEIASLSEDELKKQLVELKQRFADIRFNKIVEPPQNPMIFKNLRRDIARMKTALHRYQTQK</sequence>
<proteinExistence type="inferred from homology"/>
<feature type="chain" id="PRO_1000121746" description="Large ribosomal subunit protein uL29">
    <location>
        <begin position="1"/>
        <end position="64"/>
    </location>
</feature>